<name>RPOA_EHRRW</name>
<comment type="function">
    <text evidence="1">DNA-dependent RNA polymerase catalyzes the transcription of DNA into RNA using the four ribonucleoside triphosphates as substrates.</text>
</comment>
<comment type="catalytic activity">
    <reaction evidence="1">
        <text>RNA(n) + a ribonucleoside 5'-triphosphate = RNA(n+1) + diphosphate</text>
        <dbReference type="Rhea" id="RHEA:21248"/>
        <dbReference type="Rhea" id="RHEA-COMP:14527"/>
        <dbReference type="Rhea" id="RHEA-COMP:17342"/>
        <dbReference type="ChEBI" id="CHEBI:33019"/>
        <dbReference type="ChEBI" id="CHEBI:61557"/>
        <dbReference type="ChEBI" id="CHEBI:140395"/>
        <dbReference type="EC" id="2.7.7.6"/>
    </reaction>
</comment>
<comment type="subunit">
    <text evidence="1">Homodimer. The RNAP catalytic core consists of 2 alpha, 1 beta, 1 beta' and 1 omega subunit. When a sigma factor is associated with the core the holoenzyme is formed, which can initiate transcription.</text>
</comment>
<comment type="domain">
    <text evidence="1">The N-terminal domain is essential for RNAP assembly and basal transcription, whereas the C-terminal domain is involved in interaction with transcriptional regulators and with upstream promoter elements.</text>
</comment>
<comment type="similarity">
    <text evidence="1">Belongs to the RNA polymerase alpha chain family.</text>
</comment>
<comment type="sequence caution" evidence="2">
    <conflict type="erroneous initiation">
        <sequence resource="EMBL-CDS" id="CAH58316"/>
    </conflict>
</comment>
<evidence type="ECO:0000255" key="1">
    <source>
        <dbReference type="HAMAP-Rule" id="MF_00059"/>
    </source>
</evidence>
<evidence type="ECO:0000305" key="2"/>
<protein>
    <recommendedName>
        <fullName evidence="1">DNA-directed RNA polymerase subunit alpha</fullName>
        <shortName evidence="1">RNAP subunit alpha</shortName>
        <ecNumber evidence="1">2.7.7.6</ecNumber>
    </recommendedName>
    <alternativeName>
        <fullName evidence="1">RNA polymerase subunit alpha</fullName>
    </alternativeName>
    <alternativeName>
        <fullName evidence="1">Transcriptase subunit alpha</fullName>
    </alternativeName>
</protein>
<organism>
    <name type="scientific">Ehrlichia ruminantium (strain Welgevonden)</name>
    <dbReference type="NCBI Taxonomy" id="254945"/>
    <lineage>
        <taxon>Bacteria</taxon>
        <taxon>Pseudomonadati</taxon>
        <taxon>Pseudomonadota</taxon>
        <taxon>Alphaproteobacteria</taxon>
        <taxon>Rickettsiales</taxon>
        <taxon>Anaplasmataceae</taxon>
        <taxon>Ehrlichia</taxon>
    </lineage>
</organism>
<sequence>MIFDEDSSSVAQESGYMGVGSPYSSDVGRISMSDHWNKLTKPSSIKVVNHGNALNKADLIIEPLESGFALTLGNALRRVMMSSLRGFAVYGVEIENVLHEFTSISGVREDVTDILLNISMIRLKLSGMDNKVLSLKVKGPCEVRSGMIADTPDCTILNKDLLICTLDQDVDFNIKMYVNSGKGYVPAVKRKSINKFGLNDVPVNFIATNALYSPIKKASFRVESSRIGQFTDYDRLIMSVETDHSILPDEAVALAARILQDQFQQFINFDETDEPHQKVDTKDVLPYDSNLLRKVDELELSVRSYNCLKNDNITYIGDLVQKTESDMLRTPNFGRKSLNEINELLASMNLHLGMKIANWPPESIESLSKQYSEE</sequence>
<dbReference type="EC" id="2.7.7.6" evidence="1"/>
<dbReference type="EMBL" id="CR767821">
    <property type="protein sequence ID" value="CAH58316.1"/>
    <property type="status" value="ALT_INIT"/>
    <property type="molecule type" value="Genomic_DNA"/>
</dbReference>
<dbReference type="EMBL" id="CR925678">
    <property type="protein sequence ID" value="CAI27109.1"/>
    <property type="molecule type" value="Genomic_DNA"/>
</dbReference>
<dbReference type="RefSeq" id="WP_011155266.1">
    <property type="nucleotide sequence ID" value="NC_006832.1"/>
</dbReference>
<dbReference type="RefSeq" id="WP_011256130.1">
    <property type="nucleotide sequence ID" value="NC_005295.2"/>
</dbReference>
<dbReference type="SMR" id="Q5HAU5"/>
<dbReference type="GeneID" id="33058439"/>
<dbReference type="KEGG" id="eru:Erum5850"/>
<dbReference type="KEGG" id="erw:ERWE_CDS_06150"/>
<dbReference type="eggNOG" id="COG0202">
    <property type="taxonomic scope" value="Bacteria"/>
</dbReference>
<dbReference type="HOGENOM" id="CLU_053084_0_0_5"/>
<dbReference type="Proteomes" id="UP000001021">
    <property type="component" value="Chromosome"/>
</dbReference>
<dbReference type="GO" id="GO:0005737">
    <property type="term" value="C:cytoplasm"/>
    <property type="evidence" value="ECO:0007669"/>
    <property type="project" value="UniProtKB-ARBA"/>
</dbReference>
<dbReference type="GO" id="GO:0000428">
    <property type="term" value="C:DNA-directed RNA polymerase complex"/>
    <property type="evidence" value="ECO:0007669"/>
    <property type="project" value="UniProtKB-KW"/>
</dbReference>
<dbReference type="GO" id="GO:0003677">
    <property type="term" value="F:DNA binding"/>
    <property type="evidence" value="ECO:0007669"/>
    <property type="project" value="UniProtKB-UniRule"/>
</dbReference>
<dbReference type="GO" id="GO:0003899">
    <property type="term" value="F:DNA-directed RNA polymerase activity"/>
    <property type="evidence" value="ECO:0007669"/>
    <property type="project" value="UniProtKB-UniRule"/>
</dbReference>
<dbReference type="GO" id="GO:0046983">
    <property type="term" value="F:protein dimerization activity"/>
    <property type="evidence" value="ECO:0007669"/>
    <property type="project" value="InterPro"/>
</dbReference>
<dbReference type="GO" id="GO:0006351">
    <property type="term" value="P:DNA-templated transcription"/>
    <property type="evidence" value="ECO:0007669"/>
    <property type="project" value="UniProtKB-UniRule"/>
</dbReference>
<dbReference type="CDD" id="cd06928">
    <property type="entry name" value="RNAP_alpha_NTD"/>
    <property type="match status" value="1"/>
</dbReference>
<dbReference type="FunFam" id="1.10.150.20:FF:000001">
    <property type="entry name" value="DNA-directed RNA polymerase subunit alpha"/>
    <property type="match status" value="1"/>
</dbReference>
<dbReference type="FunFam" id="2.170.120.12:FF:000001">
    <property type="entry name" value="DNA-directed RNA polymerase subunit alpha"/>
    <property type="match status" value="1"/>
</dbReference>
<dbReference type="Gene3D" id="1.10.150.20">
    <property type="entry name" value="5' to 3' exonuclease, C-terminal subdomain"/>
    <property type="match status" value="1"/>
</dbReference>
<dbReference type="Gene3D" id="2.170.120.12">
    <property type="entry name" value="DNA-directed RNA polymerase, insert domain"/>
    <property type="match status" value="1"/>
</dbReference>
<dbReference type="Gene3D" id="3.30.1360.10">
    <property type="entry name" value="RNA polymerase, RBP11-like subunit"/>
    <property type="match status" value="1"/>
</dbReference>
<dbReference type="HAMAP" id="MF_00059">
    <property type="entry name" value="RNApol_bact_RpoA"/>
    <property type="match status" value="1"/>
</dbReference>
<dbReference type="InterPro" id="IPR011262">
    <property type="entry name" value="DNA-dir_RNA_pol_insert"/>
</dbReference>
<dbReference type="InterPro" id="IPR011263">
    <property type="entry name" value="DNA-dir_RNA_pol_RpoA/D/Rpb3"/>
</dbReference>
<dbReference type="InterPro" id="IPR011773">
    <property type="entry name" value="DNA-dir_RpoA"/>
</dbReference>
<dbReference type="InterPro" id="IPR036603">
    <property type="entry name" value="RBP11-like"/>
</dbReference>
<dbReference type="InterPro" id="IPR011260">
    <property type="entry name" value="RNAP_asu_C"/>
</dbReference>
<dbReference type="InterPro" id="IPR036643">
    <property type="entry name" value="RNApol_insert_sf"/>
</dbReference>
<dbReference type="NCBIfam" id="NF003513">
    <property type="entry name" value="PRK05182.1-2"/>
    <property type="match status" value="1"/>
</dbReference>
<dbReference type="NCBIfam" id="NF003519">
    <property type="entry name" value="PRK05182.2-5"/>
    <property type="match status" value="1"/>
</dbReference>
<dbReference type="NCBIfam" id="TIGR02027">
    <property type="entry name" value="rpoA"/>
    <property type="match status" value="1"/>
</dbReference>
<dbReference type="Pfam" id="PF01000">
    <property type="entry name" value="RNA_pol_A_bac"/>
    <property type="match status" value="1"/>
</dbReference>
<dbReference type="Pfam" id="PF03118">
    <property type="entry name" value="RNA_pol_A_CTD"/>
    <property type="match status" value="1"/>
</dbReference>
<dbReference type="Pfam" id="PF01193">
    <property type="entry name" value="RNA_pol_L"/>
    <property type="match status" value="1"/>
</dbReference>
<dbReference type="SMART" id="SM00662">
    <property type="entry name" value="RPOLD"/>
    <property type="match status" value="1"/>
</dbReference>
<dbReference type="SUPFAM" id="SSF47789">
    <property type="entry name" value="C-terminal domain of RNA polymerase alpha subunit"/>
    <property type="match status" value="1"/>
</dbReference>
<dbReference type="SUPFAM" id="SSF56553">
    <property type="entry name" value="Insert subdomain of RNA polymerase alpha subunit"/>
    <property type="match status" value="1"/>
</dbReference>
<dbReference type="SUPFAM" id="SSF55257">
    <property type="entry name" value="RBP11-like subunits of RNA polymerase"/>
    <property type="match status" value="1"/>
</dbReference>
<keyword id="KW-0240">DNA-directed RNA polymerase</keyword>
<keyword id="KW-0548">Nucleotidyltransferase</keyword>
<keyword id="KW-0804">Transcription</keyword>
<keyword id="KW-0808">Transferase</keyword>
<accession>Q5HAU5</accession>
<accession>Q5FD38</accession>
<gene>
    <name evidence="1" type="primary">rpoA</name>
    <name type="ordered locus">Erum5850</name>
    <name type="ordered locus">ERWE_CDS_06150</name>
</gene>
<feature type="chain" id="PRO_0000225275" description="DNA-directed RNA polymerase subunit alpha">
    <location>
        <begin position="1"/>
        <end position="374"/>
    </location>
</feature>
<feature type="region of interest" description="Alpha N-terminal domain (alpha-NTD)" evidence="1">
    <location>
        <begin position="1"/>
        <end position="270"/>
    </location>
</feature>
<feature type="region of interest" description="Alpha C-terminal domain (alpha-CTD)" evidence="1">
    <location>
        <begin position="282"/>
        <end position="374"/>
    </location>
</feature>
<proteinExistence type="inferred from homology"/>
<reference key="1">
    <citation type="journal article" date="2005" name="Proc. Natl. Acad. Sci. U.S.A.">
        <title>The genome of the heartwater agent Ehrlichia ruminantium contains multiple tandem repeats of actively variable copy number.</title>
        <authorList>
            <person name="Collins N.E."/>
            <person name="Liebenberg J."/>
            <person name="de Villiers E.P."/>
            <person name="Brayton K.A."/>
            <person name="Louw E."/>
            <person name="Pretorius A."/>
            <person name="Faber F.E."/>
            <person name="van Heerden H."/>
            <person name="Josemans A."/>
            <person name="van Kleef M."/>
            <person name="Steyn H.C."/>
            <person name="van Strijp M.F."/>
            <person name="Zweygarth E."/>
            <person name="Jongejan F."/>
            <person name="Maillard J.C."/>
            <person name="Berthier D."/>
            <person name="Botha M."/>
            <person name="Joubert F."/>
            <person name="Corton C.H."/>
            <person name="Thomson N.R."/>
            <person name="Allsopp M.T."/>
            <person name="Allsopp B.A."/>
        </authorList>
    </citation>
    <scope>NUCLEOTIDE SEQUENCE [LARGE SCALE GENOMIC DNA]</scope>
    <source>
        <strain>Welgevonden</strain>
    </source>
</reference>
<reference key="2">
    <citation type="journal article" date="2006" name="J. Bacteriol.">
        <title>Comparative genomic analysis of three strains of Ehrlichia ruminantium reveals an active process of genome size plasticity.</title>
        <authorList>
            <person name="Frutos R."/>
            <person name="Viari A."/>
            <person name="Ferraz C."/>
            <person name="Morgat A."/>
            <person name="Eychenie S."/>
            <person name="Kandassamy Y."/>
            <person name="Chantal I."/>
            <person name="Bensaid A."/>
            <person name="Coissac E."/>
            <person name="Vachiery N."/>
            <person name="Demaille J."/>
            <person name="Martinez D."/>
        </authorList>
    </citation>
    <scope>NUCLEOTIDE SEQUENCE [LARGE SCALE GENOMIC DNA]</scope>
    <source>
        <strain>Welgevonden</strain>
    </source>
</reference>